<proteinExistence type="inferred from homology"/>
<protein>
    <recommendedName>
        <fullName evidence="1">Inorganic pyrophosphatase</fullName>
        <ecNumber evidence="1">3.6.1.1</ecNumber>
    </recommendedName>
    <alternativeName>
        <fullName evidence="1">Pyrophosphate phospho-hydrolase</fullName>
        <shortName evidence="1">PPase</shortName>
    </alternativeName>
</protein>
<reference key="1">
    <citation type="journal article" date="2000" name="Nature">
        <title>Genome sequence of the endocellular bacterial symbiont of aphids Buchnera sp. APS.</title>
        <authorList>
            <person name="Shigenobu S."/>
            <person name="Watanabe H."/>
            <person name="Hattori M."/>
            <person name="Sakaki Y."/>
            <person name="Ishikawa H."/>
        </authorList>
    </citation>
    <scope>NUCLEOTIDE SEQUENCE [LARGE SCALE GENOMIC DNA]</scope>
    <source>
        <strain>APS</strain>
    </source>
</reference>
<comment type="function">
    <text evidence="1">Catalyzes the hydrolysis of inorganic pyrophosphate (PPi) forming two phosphate ions.</text>
</comment>
<comment type="catalytic activity">
    <reaction evidence="1">
        <text>diphosphate + H2O = 2 phosphate + H(+)</text>
        <dbReference type="Rhea" id="RHEA:24576"/>
        <dbReference type="ChEBI" id="CHEBI:15377"/>
        <dbReference type="ChEBI" id="CHEBI:15378"/>
        <dbReference type="ChEBI" id="CHEBI:33019"/>
        <dbReference type="ChEBI" id="CHEBI:43474"/>
        <dbReference type="EC" id="3.6.1.1"/>
    </reaction>
</comment>
<comment type="cofactor">
    <cofactor evidence="1">
        <name>Mg(2+)</name>
        <dbReference type="ChEBI" id="CHEBI:18420"/>
    </cofactor>
</comment>
<comment type="subunit">
    <text evidence="1">Homohexamer.</text>
</comment>
<comment type="subcellular location">
    <subcellularLocation>
        <location evidence="1">Cytoplasm</location>
    </subcellularLocation>
</comment>
<comment type="similarity">
    <text evidence="1">Belongs to the PPase family.</text>
</comment>
<dbReference type="EC" id="3.6.1.1" evidence="1"/>
<dbReference type="EMBL" id="BA000003">
    <property type="protein sequence ID" value="BAB12808.1"/>
    <property type="molecule type" value="Genomic_DNA"/>
</dbReference>
<dbReference type="RefSeq" id="NP_239922.1">
    <property type="nucleotide sequence ID" value="NC_002528.1"/>
</dbReference>
<dbReference type="RefSeq" id="WP_009874041.1">
    <property type="nucleotide sequence ID" value="NZ_AP036055.1"/>
</dbReference>
<dbReference type="SMR" id="P57190"/>
<dbReference type="STRING" id="563178.BUAP5A_087"/>
<dbReference type="EnsemblBacteria" id="BAB12808">
    <property type="protein sequence ID" value="BAB12808"/>
    <property type="gene ID" value="BAB12808"/>
</dbReference>
<dbReference type="KEGG" id="buc:BU088"/>
<dbReference type="PATRIC" id="fig|107806.10.peg.96"/>
<dbReference type="eggNOG" id="COG0221">
    <property type="taxonomic scope" value="Bacteria"/>
</dbReference>
<dbReference type="HOGENOM" id="CLU_073198_1_0_6"/>
<dbReference type="Proteomes" id="UP000001806">
    <property type="component" value="Chromosome"/>
</dbReference>
<dbReference type="GO" id="GO:0005737">
    <property type="term" value="C:cytoplasm"/>
    <property type="evidence" value="ECO:0007669"/>
    <property type="project" value="UniProtKB-SubCell"/>
</dbReference>
<dbReference type="GO" id="GO:0004427">
    <property type="term" value="F:inorganic diphosphate phosphatase activity"/>
    <property type="evidence" value="ECO:0007669"/>
    <property type="project" value="UniProtKB-UniRule"/>
</dbReference>
<dbReference type="GO" id="GO:0000287">
    <property type="term" value="F:magnesium ion binding"/>
    <property type="evidence" value="ECO:0007669"/>
    <property type="project" value="UniProtKB-UniRule"/>
</dbReference>
<dbReference type="GO" id="GO:0006796">
    <property type="term" value="P:phosphate-containing compound metabolic process"/>
    <property type="evidence" value="ECO:0007669"/>
    <property type="project" value="InterPro"/>
</dbReference>
<dbReference type="CDD" id="cd00412">
    <property type="entry name" value="pyrophosphatase"/>
    <property type="match status" value="1"/>
</dbReference>
<dbReference type="FunFam" id="3.90.80.10:FF:000001">
    <property type="entry name" value="Inorganic pyrophosphatase"/>
    <property type="match status" value="1"/>
</dbReference>
<dbReference type="Gene3D" id="3.90.80.10">
    <property type="entry name" value="Inorganic pyrophosphatase"/>
    <property type="match status" value="1"/>
</dbReference>
<dbReference type="HAMAP" id="MF_00209">
    <property type="entry name" value="Inorganic_PPase"/>
    <property type="match status" value="1"/>
</dbReference>
<dbReference type="InterPro" id="IPR008162">
    <property type="entry name" value="Pyrophosphatase"/>
</dbReference>
<dbReference type="InterPro" id="IPR036649">
    <property type="entry name" value="Pyrophosphatase_sf"/>
</dbReference>
<dbReference type="NCBIfam" id="NF002317">
    <property type="entry name" value="PRK01250.1"/>
    <property type="match status" value="1"/>
</dbReference>
<dbReference type="PANTHER" id="PTHR10286">
    <property type="entry name" value="INORGANIC PYROPHOSPHATASE"/>
    <property type="match status" value="1"/>
</dbReference>
<dbReference type="Pfam" id="PF00719">
    <property type="entry name" value="Pyrophosphatase"/>
    <property type="match status" value="1"/>
</dbReference>
<dbReference type="SUPFAM" id="SSF50324">
    <property type="entry name" value="Inorganic pyrophosphatase"/>
    <property type="match status" value="1"/>
</dbReference>
<dbReference type="PROSITE" id="PS00387">
    <property type="entry name" value="PPASE"/>
    <property type="match status" value="1"/>
</dbReference>
<name>IPYR_BUCAI</name>
<gene>
    <name evidence="1" type="primary">ppa</name>
    <name type="ordered locus">BU088</name>
</gene>
<accession>P57190</accession>
<keyword id="KW-0963">Cytoplasm</keyword>
<keyword id="KW-0378">Hydrolase</keyword>
<keyword id="KW-0460">Magnesium</keyword>
<keyword id="KW-0479">Metal-binding</keyword>
<keyword id="KW-1185">Reference proteome</keyword>
<sequence length="182" mass="20763">MNLNKIVAGDDIPNDIYVIIEISSNSSPIKYEVDKKSGMLFVDRFIPTPMFYPCNYGYINHTLSLDGDPLDVLVPSHYPIKSSCVIHCKPIGILNMQDESGDDAKIIAVPKSKICQEYKNINDISDISELLKKQITHFFQNYKTLEKEKWVEIIGWGNCQDAKLEINDAYNRAKKNSIFLNK</sequence>
<evidence type="ECO:0000255" key="1">
    <source>
        <dbReference type="HAMAP-Rule" id="MF_00209"/>
    </source>
</evidence>
<feature type="chain" id="PRO_0000137484" description="Inorganic pyrophosphatase">
    <location>
        <begin position="1"/>
        <end position="182"/>
    </location>
</feature>
<feature type="binding site" evidence="1">
    <location>
        <position position="30"/>
    </location>
    <ligand>
        <name>substrate</name>
    </ligand>
</feature>
<feature type="binding site" evidence="1">
    <location>
        <position position="44"/>
    </location>
    <ligand>
        <name>substrate</name>
    </ligand>
</feature>
<feature type="binding site" evidence="1">
    <location>
        <position position="56"/>
    </location>
    <ligand>
        <name>substrate</name>
    </ligand>
</feature>
<feature type="binding site" evidence="1">
    <location>
        <position position="66"/>
    </location>
    <ligand>
        <name>Mg(2+)</name>
        <dbReference type="ChEBI" id="CHEBI:18420"/>
        <label>1</label>
    </ligand>
</feature>
<feature type="binding site" evidence="1">
    <location>
        <position position="71"/>
    </location>
    <ligand>
        <name>Mg(2+)</name>
        <dbReference type="ChEBI" id="CHEBI:18420"/>
        <label>1</label>
    </ligand>
</feature>
<feature type="binding site" evidence="1">
    <location>
        <position position="71"/>
    </location>
    <ligand>
        <name>Mg(2+)</name>
        <dbReference type="ChEBI" id="CHEBI:18420"/>
        <label>2</label>
    </ligand>
</feature>
<feature type="binding site" evidence="1">
    <location>
        <position position="103"/>
    </location>
    <ligand>
        <name>Mg(2+)</name>
        <dbReference type="ChEBI" id="CHEBI:18420"/>
        <label>1</label>
    </ligand>
</feature>
<feature type="binding site" evidence="1">
    <location>
        <position position="142"/>
    </location>
    <ligand>
        <name>substrate</name>
    </ligand>
</feature>
<organism>
    <name type="scientific">Buchnera aphidicola subsp. Acyrthosiphon pisum (strain APS)</name>
    <name type="common">Acyrthosiphon pisum symbiotic bacterium</name>
    <dbReference type="NCBI Taxonomy" id="107806"/>
    <lineage>
        <taxon>Bacteria</taxon>
        <taxon>Pseudomonadati</taxon>
        <taxon>Pseudomonadota</taxon>
        <taxon>Gammaproteobacteria</taxon>
        <taxon>Enterobacterales</taxon>
        <taxon>Erwiniaceae</taxon>
        <taxon>Buchnera</taxon>
    </lineage>
</organism>